<sequence length="95" mass="11140">MGNETGKETSGKEQDKVKDVIIRLVEEDGRIAVYLVQGLNTEFLGYADEIQLAKEIAKLNKFISIWRLNPLDHRLRDYLRQEIIERLVRVMAYMM</sequence>
<dbReference type="EMBL" id="AJ567472">
    <property type="protein sequence ID" value="CAD98936.1"/>
    <property type="molecule type" value="Genomic_DNA"/>
</dbReference>
<dbReference type="RefSeq" id="YP_003732.1">
    <property type="nucleotide sequence ID" value="NC_005830.1"/>
</dbReference>
<dbReference type="KEGG" id="vg:2769176"/>
<dbReference type="Proteomes" id="UP000000514">
    <property type="component" value="Genome"/>
</dbReference>
<protein>
    <recommendedName>
        <fullName>Uncharacterized protein ORF95</fullName>
    </recommendedName>
</protein>
<accession>Q70LE4</accession>
<organismHost>
    <name type="scientific">Acidianus hospitalis</name>
    <dbReference type="NCBI Taxonomy" id="563177"/>
</organismHost>
<organismHost>
    <name type="scientific">Acidianus infernus</name>
    <dbReference type="NCBI Taxonomy" id="12915"/>
</organismHost>
<name>Y095_AFV1Y</name>
<feature type="chain" id="PRO_0000384549" description="Uncharacterized protein ORF95">
    <location>
        <begin position="1"/>
        <end position="95"/>
    </location>
</feature>
<gene>
    <name type="ORF">ORF95</name>
</gene>
<keyword id="KW-1185">Reference proteome</keyword>
<organism>
    <name type="scientific">Acidianus filamentous virus 1 (isolate United States/Yellowstone)</name>
    <name type="common">AFV-1</name>
    <dbReference type="NCBI Taxonomy" id="654909"/>
    <lineage>
        <taxon>Viruses</taxon>
        <taxon>Adnaviria</taxon>
        <taxon>Zilligvirae</taxon>
        <taxon>Taleaviricota</taxon>
        <taxon>Tokiviricetes</taxon>
        <taxon>Ligamenvirales</taxon>
        <taxon>Ungulaviridae</taxon>
        <taxon>Captovirus</taxon>
        <taxon>Acidianus filamentous virus 1</taxon>
    </lineage>
</organism>
<reference key="1">
    <citation type="journal article" date="2003" name="Virology">
        <title>AFV1, a novel virus infecting hyperthermophilic archaea of the genus acidianus.</title>
        <authorList>
            <person name="Bettstetter M."/>
            <person name="Peng X."/>
            <person name="Garrett R.A."/>
            <person name="Prangishvili D."/>
        </authorList>
    </citation>
    <scope>NUCLEOTIDE SEQUENCE [GENOMIC DNA]</scope>
</reference>
<proteinExistence type="predicted"/>